<reference key="1">
    <citation type="journal article" date="2004" name="Mol. Plant Microbe Interact.">
        <title>The genome sequence of the Gram-positive sugarcane pathogen Leifsonia xyli subsp. xyli.</title>
        <authorList>
            <person name="Monteiro-Vitorello C.B."/>
            <person name="Camargo L.E.A."/>
            <person name="Van Sluys M.A."/>
            <person name="Kitajima J.P."/>
            <person name="Truffi D."/>
            <person name="do Amaral A.M."/>
            <person name="Harakava R."/>
            <person name="de Oliveira J.C.F."/>
            <person name="Wood D."/>
            <person name="de Oliveira M.C."/>
            <person name="Miyaki C.Y."/>
            <person name="Takita M.A."/>
            <person name="da Silva A.C.R."/>
            <person name="Furlan L.R."/>
            <person name="Carraro D.M."/>
            <person name="Camarotte G."/>
            <person name="Almeida N.F. Jr."/>
            <person name="Carrer H."/>
            <person name="Coutinho L.L."/>
            <person name="El-Dorry H.A."/>
            <person name="Ferro M.I.T."/>
            <person name="Gagliardi P.R."/>
            <person name="Giglioti E."/>
            <person name="Goldman M.H.S."/>
            <person name="Goldman G.H."/>
            <person name="Kimura E.T."/>
            <person name="Ferro E.S."/>
            <person name="Kuramae E.E."/>
            <person name="Lemos E.G.M."/>
            <person name="Lemos M.V.F."/>
            <person name="Mauro S.M.Z."/>
            <person name="Machado M.A."/>
            <person name="Marino C.L."/>
            <person name="Menck C.F."/>
            <person name="Nunes L.R."/>
            <person name="Oliveira R.C."/>
            <person name="Pereira G.G."/>
            <person name="Siqueira W."/>
            <person name="de Souza A.A."/>
            <person name="Tsai S.M."/>
            <person name="Zanca A.S."/>
            <person name="Simpson A.J.G."/>
            <person name="Brumbley S.M."/>
            <person name="Setubal J.C."/>
        </authorList>
    </citation>
    <scope>NUCLEOTIDE SEQUENCE [LARGE SCALE GENOMIC DNA]</scope>
    <source>
        <strain>CTCB07</strain>
    </source>
</reference>
<evidence type="ECO:0000255" key="1">
    <source>
        <dbReference type="HAMAP-Rule" id="MF_01322"/>
    </source>
</evidence>
<comment type="function">
    <text evidence="1">DNA-dependent RNA polymerase catalyzes the transcription of DNA into RNA using the four ribonucleoside triphosphates as substrates.</text>
</comment>
<comment type="catalytic activity">
    <reaction evidence="1">
        <text>RNA(n) + a ribonucleoside 5'-triphosphate = RNA(n+1) + diphosphate</text>
        <dbReference type="Rhea" id="RHEA:21248"/>
        <dbReference type="Rhea" id="RHEA-COMP:14527"/>
        <dbReference type="Rhea" id="RHEA-COMP:17342"/>
        <dbReference type="ChEBI" id="CHEBI:33019"/>
        <dbReference type="ChEBI" id="CHEBI:61557"/>
        <dbReference type="ChEBI" id="CHEBI:140395"/>
        <dbReference type="EC" id="2.7.7.6"/>
    </reaction>
</comment>
<comment type="cofactor">
    <cofactor evidence="1">
        <name>Mg(2+)</name>
        <dbReference type="ChEBI" id="CHEBI:18420"/>
    </cofactor>
    <text evidence="1">Binds 1 Mg(2+) ion per subunit.</text>
</comment>
<comment type="cofactor">
    <cofactor evidence="1">
        <name>Zn(2+)</name>
        <dbReference type="ChEBI" id="CHEBI:29105"/>
    </cofactor>
    <text evidence="1">Binds 2 Zn(2+) ions per subunit.</text>
</comment>
<comment type="subunit">
    <text evidence="1">The RNAP catalytic core consists of 2 alpha, 1 beta, 1 beta' and 1 omega subunit. When a sigma factor is associated with the core the holoenzyme is formed, which can initiate transcription.</text>
</comment>
<comment type="similarity">
    <text evidence="1">Belongs to the RNA polymerase beta' chain family.</text>
</comment>
<organism>
    <name type="scientific">Leifsonia xyli subsp. xyli (strain CTCB07)</name>
    <dbReference type="NCBI Taxonomy" id="281090"/>
    <lineage>
        <taxon>Bacteria</taxon>
        <taxon>Bacillati</taxon>
        <taxon>Actinomycetota</taxon>
        <taxon>Actinomycetes</taxon>
        <taxon>Micrococcales</taxon>
        <taxon>Microbacteriaceae</taxon>
        <taxon>Leifsonia</taxon>
    </lineage>
</organism>
<accession>Q6ACX6</accession>
<protein>
    <recommendedName>
        <fullName evidence="1">DNA-directed RNA polymerase subunit beta'</fullName>
        <shortName evidence="1">RNAP subunit beta'</shortName>
        <ecNumber evidence="1">2.7.7.6</ecNumber>
    </recommendedName>
    <alternativeName>
        <fullName evidence="1">RNA polymerase subunit beta'</fullName>
    </alternativeName>
    <alternativeName>
        <fullName evidence="1">Transcriptase subunit beta'</fullName>
    </alternativeName>
</protein>
<name>RPOC_LEIXX</name>
<feature type="chain" id="PRO_0000225548" description="DNA-directed RNA polymerase subunit beta'">
    <location>
        <begin position="1"/>
        <end position="1291"/>
    </location>
</feature>
<feature type="binding site" evidence="1">
    <location>
        <position position="60"/>
    </location>
    <ligand>
        <name>Zn(2+)</name>
        <dbReference type="ChEBI" id="CHEBI:29105"/>
        <label>1</label>
    </ligand>
</feature>
<feature type="binding site" evidence="1">
    <location>
        <position position="62"/>
    </location>
    <ligand>
        <name>Zn(2+)</name>
        <dbReference type="ChEBI" id="CHEBI:29105"/>
        <label>1</label>
    </ligand>
</feature>
<feature type="binding site" evidence="1">
    <location>
        <position position="75"/>
    </location>
    <ligand>
        <name>Zn(2+)</name>
        <dbReference type="ChEBI" id="CHEBI:29105"/>
        <label>1</label>
    </ligand>
</feature>
<feature type="binding site" evidence="1">
    <location>
        <position position="78"/>
    </location>
    <ligand>
        <name>Zn(2+)</name>
        <dbReference type="ChEBI" id="CHEBI:29105"/>
        <label>1</label>
    </ligand>
</feature>
<feature type="binding site" evidence="1">
    <location>
        <position position="535"/>
    </location>
    <ligand>
        <name>Mg(2+)</name>
        <dbReference type="ChEBI" id="CHEBI:18420"/>
    </ligand>
</feature>
<feature type="binding site" evidence="1">
    <location>
        <position position="537"/>
    </location>
    <ligand>
        <name>Mg(2+)</name>
        <dbReference type="ChEBI" id="CHEBI:18420"/>
    </ligand>
</feature>
<feature type="binding site" evidence="1">
    <location>
        <position position="539"/>
    </location>
    <ligand>
        <name>Mg(2+)</name>
        <dbReference type="ChEBI" id="CHEBI:18420"/>
    </ligand>
</feature>
<feature type="binding site" evidence="1">
    <location>
        <position position="874"/>
    </location>
    <ligand>
        <name>Zn(2+)</name>
        <dbReference type="ChEBI" id="CHEBI:29105"/>
        <label>2</label>
    </ligand>
</feature>
<feature type="binding site" evidence="1">
    <location>
        <position position="951"/>
    </location>
    <ligand>
        <name>Zn(2+)</name>
        <dbReference type="ChEBI" id="CHEBI:29105"/>
        <label>2</label>
    </ligand>
</feature>
<feature type="binding site" evidence="1">
    <location>
        <position position="958"/>
    </location>
    <ligand>
        <name>Zn(2+)</name>
        <dbReference type="ChEBI" id="CHEBI:29105"/>
        <label>2</label>
    </ligand>
</feature>
<feature type="binding site" evidence="1">
    <location>
        <position position="961"/>
    </location>
    <ligand>
        <name>Zn(2+)</name>
        <dbReference type="ChEBI" id="CHEBI:29105"/>
        <label>2</label>
    </ligand>
</feature>
<keyword id="KW-0240">DNA-directed RNA polymerase</keyword>
<keyword id="KW-0460">Magnesium</keyword>
<keyword id="KW-0479">Metal-binding</keyword>
<keyword id="KW-0548">Nucleotidyltransferase</keyword>
<keyword id="KW-1185">Reference proteome</keyword>
<keyword id="KW-0804">Transcription</keyword>
<keyword id="KW-0808">Transferase</keyword>
<keyword id="KW-0862">Zinc</keyword>
<gene>
    <name evidence="1" type="primary">rpoC</name>
    <name type="ordered locus">Lxx20630</name>
</gene>
<dbReference type="EC" id="2.7.7.6" evidence="1"/>
<dbReference type="EMBL" id="AE016822">
    <property type="protein sequence ID" value="AAT89768.1"/>
    <property type="molecule type" value="Genomic_DNA"/>
</dbReference>
<dbReference type="RefSeq" id="WP_011186753.1">
    <property type="nucleotide sequence ID" value="NC_006087.1"/>
</dbReference>
<dbReference type="SMR" id="Q6ACX6"/>
<dbReference type="STRING" id="281090.Lxx20630"/>
<dbReference type="KEGG" id="lxx:Lxx20630"/>
<dbReference type="eggNOG" id="COG0086">
    <property type="taxonomic scope" value="Bacteria"/>
</dbReference>
<dbReference type="HOGENOM" id="CLU_000524_3_0_11"/>
<dbReference type="Proteomes" id="UP000001306">
    <property type="component" value="Chromosome"/>
</dbReference>
<dbReference type="GO" id="GO:0000428">
    <property type="term" value="C:DNA-directed RNA polymerase complex"/>
    <property type="evidence" value="ECO:0007669"/>
    <property type="project" value="UniProtKB-KW"/>
</dbReference>
<dbReference type="GO" id="GO:0003677">
    <property type="term" value="F:DNA binding"/>
    <property type="evidence" value="ECO:0007669"/>
    <property type="project" value="UniProtKB-UniRule"/>
</dbReference>
<dbReference type="GO" id="GO:0003899">
    <property type="term" value="F:DNA-directed RNA polymerase activity"/>
    <property type="evidence" value="ECO:0007669"/>
    <property type="project" value="UniProtKB-UniRule"/>
</dbReference>
<dbReference type="GO" id="GO:0000287">
    <property type="term" value="F:magnesium ion binding"/>
    <property type="evidence" value="ECO:0007669"/>
    <property type="project" value="UniProtKB-UniRule"/>
</dbReference>
<dbReference type="GO" id="GO:0008270">
    <property type="term" value="F:zinc ion binding"/>
    <property type="evidence" value="ECO:0007669"/>
    <property type="project" value="UniProtKB-UniRule"/>
</dbReference>
<dbReference type="GO" id="GO:0006351">
    <property type="term" value="P:DNA-templated transcription"/>
    <property type="evidence" value="ECO:0007669"/>
    <property type="project" value="UniProtKB-UniRule"/>
</dbReference>
<dbReference type="CDD" id="cd02655">
    <property type="entry name" value="RNAP_beta'_C"/>
    <property type="match status" value="1"/>
</dbReference>
<dbReference type="CDD" id="cd01609">
    <property type="entry name" value="RNAP_beta'_N"/>
    <property type="match status" value="1"/>
</dbReference>
<dbReference type="FunFam" id="1.10.150.390:FF:000002">
    <property type="entry name" value="DNA-directed RNA polymerase subunit beta"/>
    <property type="match status" value="1"/>
</dbReference>
<dbReference type="FunFam" id="1.10.40.90:FF:000001">
    <property type="entry name" value="DNA-directed RNA polymerase subunit beta"/>
    <property type="match status" value="1"/>
</dbReference>
<dbReference type="FunFam" id="4.10.860.120:FF:000001">
    <property type="entry name" value="DNA-directed RNA polymerase subunit beta"/>
    <property type="match status" value="1"/>
</dbReference>
<dbReference type="Gene3D" id="1.10.132.30">
    <property type="match status" value="1"/>
</dbReference>
<dbReference type="Gene3D" id="1.10.150.390">
    <property type="match status" value="1"/>
</dbReference>
<dbReference type="Gene3D" id="1.10.1790.20">
    <property type="match status" value="1"/>
</dbReference>
<dbReference type="Gene3D" id="1.10.40.90">
    <property type="match status" value="1"/>
</dbReference>
<dbReference type="Gene3D" id="2.40.40.20">
    <property type="match status" value="1"/>
</dbReference>
<dbReference type="Gene3D" id="2.40.50.100">
    <property type="match status" value="1"/>
</dbReference>
<dbReference type="Gene3D" id="4.10.860.120">
    <property type="entry name" value="RNA polymerase II, clamp domain"/>
    <property type="match status" value="1"/>
</dbReference>
<dbReference type="Gene3D" id="1.10.274.100">
    <property type="entry name" value="RNA polymerase Rpb1, domain 3"/>
    <property type="match status" value="1"/>
</dbReference>
<dbReference type="HAMAP" id="MF_01322">
    <property type="entry name" value="RNApol_bact_RpoC"/>
    <property type="match status" value="1"/>
</dbReference>
<dbReference type="InterPro" id="IPR045867">
    <property type="entry name" value="DNA-dir_RpoC_beta_prime"/>
</dbReference>
<dbReference type="InterPro" id="IPR012754">
    <property type="entry name" value="DNA-dir_RpoC_beta_prime_bact"/>
</dbReference>
<dbReference type="InterPro" id="IPR000722">
    <property type="entry name" value="RNA_pol_asu"/>
</dbReference>
<dbReference type="InterPro" id="IPR006592">
    <property type="entry name" value="RNA_pol_N"/>
</dbReference>
<dbReference type="InterPro" id="IPR007080">
    <property type="entry name" value="RNA_pol_Rpb1_1"/>
</dbReference>
<dbReference type="InterPro" id="IPR007066">
    <property type="entry name" value="RNA_pol_Rpb1_3"/>
</dbReference>
<dbReference type="InterPro" id="IPR042102">
    <property type="entry name" value="RNA_pol_Rpb1_3_sf"/>
</dbReference>
<dbReference type="InterPro" id="IPR007083">
    <property type="entry name" value="RNA_pol_Rpb1_4"/>
</dbReference>
<dbReference type="InterPro" id="IPR007081">
    <property type="entry name" value="RNA_pol_Rpb1_5"/>
</dbReference>
<dbReference type="InterPro" id="IPR044893">
    <property type="entry name" value="RNA_pol_Rpb1_clamp_domain"/>
</dbReference>
<dbReference type="InterPro" id="IPR038120">
    <property type="entry name" value="Rpb1_funnel_sf"/>
</dbReference>
<dbReference type="NCBIfam" id="NF011498">
    <property type="entry name" value="PRK14906.1"/>
    <property type="match status" value="1"/>
</dbReference>
<dbReference type="NCBIfam" id="TIGR02386">
    <property type="entry name" value="rpoC_TIGR"/>
    <property type="match status" value="1"/>
</dbReference>
<dbReference type="PANTHER" id="PTHR19376">
    <property type="entry name" value="DNA-DIRECTED RNA POLYMERASE"/>
    <property type="match status" value="1"/>
</dbReference>
<dbReference type="PANTHER" id="PTHR19376:SF54">
    <property type="entry name" value="DNA-DIRECTED RNA POLYMERASE SUBUNIT BETA"/>
    <property type="match status" value="1"/>
</dbReference>
<dbReference type="Pfam" id="PF04997">
    <property type="entry name" value="RNA_pol_Rpb1_1"/>
    <property type="match status" value="1"/>
</dbReference>
<dbReference type="Pfam" id="PF00623">
    <property type="entry name" value="RNA_pol_Rpb1_2"/>
    <property type="match status" value="2"/>
</dbReference>
<dbReference type="Pfam" id="PF04983">
    <property type="entry name" value="RNA_pol_Rpb1_3"/>
    <property type="match status" value="1"/>
</dbReference>
<dbReference type="Pfam" id="PF05000">
    <property type="entry name" value="RNA_pol_Rpb1_4"/>
    <property type="match status" value="1"/>
</dbReference>
<dbReference type="Pfam" id="PF04998">
    <property type="entry name" value="RNA_pol_Rpb1_5"/>
    <property type="match status" value="1"/>
</dbReference>
<dbReference type="SMART" id="SM00663">
    <property type="entry name" value="RPOLA_N"/>
    <property type="match status" value="1"/>
</dbReference>
<dbReference type="SUPFAM" id="SSF64484">
    <property type="entry name" value="beta and beta-prime subunits of DNA dependent RNA-polymerase"/>
    <property type="match status" value="1"/>
</dbReference>
<proteinExistence type="inferred from homology"/>
<sequence>MLDATTFDELRIGLATADDIRRWSYGEVKKPETINYRTLKPEKDGLFGEQIFGPSRDWECSCGKYKRVRFKGIVCERCGVEVTKSSVRRERMGHIELAAPVTHIWYFKGVPSRLGYLLDMAPKDLEKVIYFAAYMVIDVDEEGRHADMPGLENELRLESKTLSDQRDARVAERLQRLETDLAALEEEGAKADQKRRVKDTAEKEMGQLRKSFDEDIARLERVWESFRTLKVGDLKPEDADFNELLDRFGLYFEAFMGAEAIKRRLQAFDLNQEAELLREQIATGKGQKKIRAIKRLRVVSSFLATGNSPAAMVLDVVPVIPPELRPMVQLDGGRFATSDLNDLYRRVINRNNRLRRLLDLGAPEIIVNNEKRMLQEAVDALFDNGRRGRPVTGTGNRALKSLSDMLKGKQGRFRQNLLGKRVDYSGRSVIIVGPQLKLHQCGLPKQMALELFKPFVIKRLIDLSHAQNIKAAKRMVERSRPQVWDVLEEIIRERPVLLNRAPTLHRLGIQAFEPQLVEGKAIQLHPLVCAAFNADFDGDQMAVHLPLSVEAQAEARILMLASNNILKPSDGRPVTLPSQDMIIGLHHLTTVREGAEGEGRAFASVSEAIMAKDQGSLHLNATIKIRLDNYVPSDAADTGTEPVTAVVETTLGRALFNEALPVDYPYVEAVADKGQISAIVNALAERYPKVEVAAALDRIKDAGFYWGTRSGVTVSLSDILTPPNKPQIVAGYEKKAAKINSEFEKGLTTDLERRQELVKIWTEATNEVAEAMSANFPADNTINRMVTSGARGNWLQVRNIAGMRGLVNNPKGEIIPRPIISSYREGLSVAEYFIATHGARKGLADTALRTADSGYLTRRLVDVSQDVIIREDDCGTTKGLDLPIATVDAEGVLTRDPNVENSVFARTLAADAVGTDGTVVAKAGEDVGDVLIDKLVAAGVVDIKVRSVLTCESAVGVCAACYGRSLATGKLVDIGEAVGIIAAQSIGEPGTQLTMRTFHTGGSASADDITQGLPRVQELFEARTPKGASPIAEAAGRIVIEETDKSRKVILTPDNGDEPHVYPVLKRSTLLVEDRQQVELGQQLIVGTVDPKEVLRVKGVREVQKHLVGGVQGVYRSQGVPIHDKHIEVIVRQMLRKVTVVDHGDTDLLPGELVDRSRYNEINRGALQEGKKTASARQEVMGITKASLATESWLSAASFQETTRVLTQAAMEGKSDPLIGLKENVIIGKLIPAGTGLSRYRNVSVEATEEAKAERYPNRIFADDSAFSENDLSFVDFDSFSSDDYTPGTYN</sequence>